<sequence length="104" mass="11672">MNGTIYQRIEDNAHFRELVEKRQRFATILSIIMLAVYIGFILLIAFAPGWLGTPLNPNTSVTRGIPIGVGVIVISFVLTGIYIWRANGEFDRLNNEVLHEVQAS</sequence>
<organism>
    <name type="scientific">Shigella flexneri</name>
    <dbReference type="NCBI Taxonomy" id="623"/>
    <lineage>
        <taxon>Bacteria</taxon>
        <taxon>Pseudomonadati</taxon>
        <taxon>Pseudomonadota</taxon>
        <taxon>Gammaproteobacteria</taxon>
        <taxon>Enterobacterales</taxon>
        <taxon>Enterobacteriaceae</taxon>
        <taxon>Shigella</taxon>
    </lineage>
</organism>
<proteinExistence type="inferred from homology"/>
<gene>
    <name type="primary">yjcH</name>
    <name type="ordered locus">SF4128</name>
    <name type="ordered locus">S3595</name>
</gene>
<comment type="subcellular location">
    <subcellularLocation>
        <location evidence="1">Cell inner membrane</location>
        <topology evidence="1">Multi-pass membrane protein</topology>
    </subcellularLocation>
</comment>
<dbReference type="EMBL" id="AE005674">
    <property type="protein sequence ID" value="AAN45552.2"/>
    <property type="molecule type" value="Genomic_DNA"/>
</dbReference>
<dbReference type="EMBL" id="AE014073">
    <property type="protein sequence ID" value="AAP18640.1"/>
    <property type="molecule type" value="Genomic_DNA"/>
</dbReference>
<dbReference type="RefSeq" id="NP_709845.2">
    <property type="nucleotide sequence ID" value="NC_004337.2"/>
</dbReference>
<dbReference type="RefSeq" id="WP_001014565.1">
    <property type="nucleotide sequence ID" value="NZ_WPGW01000075.1"/>
</dbReference>
<dbReference type="STRING" id="198214.SF4128"/>
<dbReference type="PaxDb" id="198214-SF4128"/>
<dbReference type="GeneID" id="1026983"/>
<dbReference type="KEGG" id="sfl:SF4128"/>
<dbReference type="KEGG" id="sfx:S3595"/>
<dbReference type="PATRIC" id="fig|198214.7.peg.4870"/>
<dbReference type="HOGENOM" id="CLU_123372_2_1_6"/>
<dbReference type="Proteomes" id="UP000001006">
    <property type="component" value="Chromosome"/>
</dbReference>
<dbReference type="Proteomes" id="UP000002673">
    <property type="component" value="Chromosome"/>
</dbReference>
<dbReference type="GO" id="GO:0005886">
    <property type="term" value="C:plasma membrane"/>
    <property type="evidence" value="ECO:0007669"/>
    <property type="project" value="UniProtKB-SubCell"/>
</dbReference>
<dbReference type="InterPro" id="IPR007436">
    <property type="entry name" value="DUF485"/>
</dbReference>
<dbReference type="InterPro" id="IPR052959">
    <property type="entry name" value="Inner_membrane_assoc"/>
</dbReference>
<dbReference type="PANTHER" id="PTHR38598">
    <property type="entry name" value="INNER MEMBRANE PROTEIN YJCH"/>
    <property type="match status" value="1"/>
</dbReference>
<dbReference type="PANTHER" id="PTHR38598:SF1">
    <property type="entry name" value="INNER MEMBRANE PROTEIN YJCH"/>
    <property type="match status" value="1"/>
</dbReference>
<dbReference type="Pfam" id="PF04341">
    <property type="entry name" value="DUF485"/>
    <property type="match status" value="1"/>
</dbReference>
<protein>
    <recommendedName>
        <fullName>Inner membrane protein YjcH</fullName>
    </recommendedName>
</protein>
<name>YJCH_SHIFL</name>
<reference key="1">
    <citation type="journal article" date="2002" name="Nucleic Acids Res.">
        <title>Genome sequence of Shigella flexneri 2a: insights into pathogenicity through comparison with genomes of Escherichia coli K12 and O157.</title>
        <authorList>
            <person name="Jin Q."/>
            <person name="Yuan Z."/>
            <person name="Xu J."/>
            <person name="Wang Y."/>
            <person name="Shen Y."/>
            <person name="Lu W."/>
            <person name="Wang J."/>
            <person name="Liu H."/>
            <person name="Yang J."/>
            <person name="Yang F."/>
            <person name="Zhang X."/>
            <person name="Zhang J."/>
            <person name="Yang G."/>
            <person name="Wu H."/>
            <person name="Qu D."/>
            <person name="Dong J."/>
            <person name="Sun L."/>
            <person name="Xue Y."/>
            <person name="Zhao A."/>
            <person name="Gao Y."/>
            <person name="Zhu J."/>
            <person name="Kan B."/>
            <person name="Ding K."/>
            <person name="Chen S."/>
            <person name="Cheng H."/>
            <person name="Yao Z."/>
            <person name="He B."/>
            <person name="Chen R."/>
            <person name="Ma D."/>
            <person name="Qiang B."/>
            <person name="Wen Y."/>
            <person name="Hou Y."/>
            <person name="Yu J."/>
        </authorList>
    </citation>
    <scope>NUCLEOTIDE SEQUENCE [LARGE SCALE GENOMIC DNA]</scope>
    <source>
        <strain>301 / Serotype 2a</strain>
    </source>
</reference>
<reference key="2">
    <citation type="journal article" date="2003" name="Infect. Immun.">
        <title>Complete genome sequence and comparative genomics of Shigella flexneri serotype 2a strain 2457T.</title>
        <authorList>
            <person name="Wei J."/>
            <person name="Goldberg M.B."/>
            <person name="Burland V."/>
            <person name="Venkatesan M.M."/>
            <person name="Deng W."/>
            <person name="Fournier G."/>
            <person name="Mayhew G.F."/>
            <person name="Plunkett G. III"/>
            <person name="Rose D.J."/>
            <person name="Darling A."/>
            <person name="Mau B."/>
            <person name="Perna N.T."/>
            <person name="Payne S.M."/>
            <person name="Runyen-Janecky L.J."/>
            <person name="Zhou S."/>
            <person name="Schwartz D.C."/>
            <person name="Blattner F.R."/>
        </authorList>
    </citation>
    <scope>NUCLEOTIDE SEQUENCE [LARGE SCALE GENOMIC DNA]</scope>
    <source>
        <strain>ATCC 700930 / 2457T / Serotype 2a</strain>
    </source>
</reference>
<keyword id="KW-0997">Cell inner membrane</keyword>
<keyword id="KW-1003">Cell membrane</keyword>
<keyword id="KW-0472">Membrane</keyword>
<keyword id="KW-1185">Reference proteome</keyword>
<keyword id="KW-0812">Transmembrane</keyword>
<keyword id="KW-1133">Transmembrane helix</keyword>
<feature type="chain" id="PRO_0000169725" description="Inner membrane protein YjcH">
    <location>
        <begin position="1"/>
        <end position="104"/>
    </location>
</feature>
<feature type="topological domain" description="Cytoplasmic" evidence="2">
    <location>
        <begin position="1"/>
        <end position="24"/>
    </location>
</feature>
<feature type="transmembrane region" description="Helical" evidence="2">
    <location>
        <begin position="25"/>
        <end position="47"/>
    </location>
</feature>
<feature type="topological domain" description="Periplasmic" evidence="2">
    <location>
        <begin position="48"/>
        <end position="61"/>
    </location>
</feature>
<feature type="transmembrane region" description="Helical" evidence="2">
    <location>
        <begin position="62"/>
        <end position="84"/>
    </location>
</feature>
<feature type="topological domain" description="Cytoplasmic" evidence="2">
    <location>
        <begin position="85"/>
        <end position="104"/>
    </location>
</feature>
<evidence type="ECO:0000250" key="1"/>
<evidence type="ECO:0000255" key="2"/>
<accession>P0AF55</accession>
<accession>P32706</accession>